<sequence>MNTLVNILFIMIPLLFSVAYLVYFERKVIGAIQLRHGPSVVGPFGLLQPFADAIKLLVKEPIIPFRANTILFIMAPMLTFILALIVWAVIPFGAEVITENGQQIVIPKVIANVNIGVLYVLAISSLGIYGIIVAGWSSNSNYAFLGSIRSAAQMISYEVSMGLIVATVVITTGTLNLGEMVATKHSMPFWIDLLMMPIGVVFFISLLAETNRHPFDLPEAEAELVSGYNVEYSSMPFALFFLGEYANMILGSAMMTIFFLGGWYPPLKLSLLYKIPGLIWFVLKIVLLLFIFVWTRATIPRYRYDQLMRLGWKVFLPISVLWVILISGVLLFTGNLPGRGL</sequence>
<gene>
    <name evidence="1" type="primary">nuoH</name>
    <name type="ordered locus">Wbm0375</name>
</gene>
<comment type="function">
    <text evidence="1">NDH-1 shuttles electrons from NADH, via FMN and iron-sulfur (Fe-S) centers, to quinones in the respiratory chain. The immediate electron acceptor for the enzyme in this species is believed to be ubiquinone. Couples the redox reaction to proton translocation (for every two electrons transferred, four hydrogen ions are translocated across the cytoplasmic membrane), and thus conserves the redox energy in a proton gradient. This subunit may bind ubiquinone.</text>
</comment>
<comment type="catalytic activity">
    <reaction evidence="1">
        <text>a quinone + NADH + 5 H(+)(in) = a quinol + NAD(+) + 4 H(+)(out)</text>
        <dbReference type="Rhea" id="RHEA:57888"/>
        <dbReference type="ChEBI" id="CHEBI:15378"/>
        <dbReference type="ChEBI" id="CHEBI:24646"/>
        <dbReference type="ChEBI" id="CHEBI:57540"/>
        <dbReference type="ChEBI" id="CHEBI:57945"/>
        <dbReference type="ChEBI" id="CHEBI:132124"/>
    </reaction>
</comment>
<comment type="subunit">
    <text evidence="1">NDH-1 is composed of 14 different subunits. Subunits NuoA, H, J, K, L, M, N constitute the membrane sector of the complex.</text>
</comment>
<comment type="subcellular location">
    <subcellularLocation>
        <location evidence="1">Cell membrane</location>
        <topology evidence="1">Multi-pass membrane protein</topology>
    </subcellularLocation>
</comment>
<comment type="similarity">
    <text evidence="1">Belongs to the complex I subunit 1 family.</text>
</comment>
<comment type="sequence caution" evidence="2">
    <conflict type="erroneous initiation">
        <sequence resource="EMBL-CDS" id="AAW70963"/>
    </conflict>
</comment>
<keyword id="KW-1003">Cell membrane</keyword>
<keyword id="KW-0472">Membrane</keyword>
<keyword id="KW-0520">NAD</keyword>
<keyword id="KW-0874">Quinone</keyword>
<keyword id="KW-1185">Reference proteome</keyword>
<keyword id="KW-1278">Translocase</keyword>
<keyword id="KW-0812">Transmembrane</keyword>
<keyword id="KW-1133">Transmembrane helix</keyword>
<keyword id="KW-0830">Ubiquinone</keyword>
<dbReference type="EC" id="7.1.1.-" evidence="1"/>
<dbReference type="EMBL" id="AE017321">
    <property type="protein sequence ID" value="AAW70963.1"/>
    <property type="status" value="ALT_INIT"/>
    <property type="molecule type" value="Genomic_DNA"/>
</dbReference>
<dbReference type="RefSeq" id="WP_011256573.1">
    <property type="nucleotide sequence ID" value="NC_006833.1"/>
</dbReference>
<dbReference type="SMR" id="Q5GSR1"/>
<dbReference type="STRING" id="292805.Wbm0375"/>
<dbReference type="KEGG" id="wbm:Wbm0375"/>
<dbReference type="eggNOG" id="COG1005">
    <property type="taxonomic scope" value="Bacteria"/>
</dbReference>
<dbReference type="HOGENOM" id="CLU_015134_0_1_5"/>
<dbReference type="Proteomes" id="UP000000534">
    <property type="component" value="Chromosome"/>
</dbReference>
<dbReference type="GO" id="GO:0005886">
    <property type="term" value="C:plasma membrane"/>
    <property type="evidence" value="ECO:0007669"/>
    <property type="project" value="UniProtKB-SubCell"/>
</dbReference>
<dbReference type="GO" id="GO:0003954">
    <property type="term" value="F:NADH dehydrogenase activity"/>
    <property type="evidence" value="ECO:0007669"/>
    <property type="project" value="TreeGrafter"/>
</dbReference>
<dbReference type="GO" id="GO:0016655">
    <property type="term" value="F:oxidoreductase activity, acting on NAD(P)H, quinone or similar compound as acceptor"/>
    <property type="evidence" value="ECO:0007669"/>
    <property type="project" value="UniProtKB-UniRule"/>
</dbReference>
<dbReference type="GO" id="GO:0048038">
    <property type="term" value="F:quinone binding"/>
    <property type="evidence" value="ECO:0007669"/>
    <property type="project" value="UniProtKB-KW"/>
</dbReference>
<dbReference type="GO" id="GO:0009060">
    <property type="term" value="P:aerobic respiration"/>
    <property type="evidence" value="ECO:0007669"/>
    <property type="project" value="TreeGrafter"/>
</dbReference>
<dbReference type="HAMAP" id="MF_01350">
    <property type="entry name" value="NDH1_NuoH"/>
    <property type="match status" value="1"/>
</dbReference>
<dbReference type="InterPro" id="IPR001694">
    <property type="entry name" value="NADH_UbQ_OxRdtase_su1/FPO"/>
</dbReference>
<dbReference type="InterPro" id="IPR018086">
    <property type="entry name" value="NADH_UbQ_OxRdtase_su1_CS"/>
</dbReference>
<dbReference type="NCBIfam" id="NF004741">
    <property type="entry name" value="PRK06076.1-2"/>
    <property type="match status" value="1"/>
</dbReference>
<dbReference type="NCBIfam" id="NF004745">
    <property type="entry name" value="PRK06076.1-6"/>
    <property type="match status" value="1"/>
</dbReference>
<dbReference type="PANTHER" id="PTHR11432">
    <property type="entry name" value="NADH DEHYDROGENASE SUBUNIT 1"/>
    <property type="match status" value="1"/>
</dbReference>
<dbReference type="PANTHER" id="PTHR11432:SF3">
    <property type="entry name" value="NADH-UBIQUINONE OXIDOREDUCTASE CHAIN 1"/>
    <property type="match status" value="1"/>
</dbReference>
<dbReference type="Pfam" id="PF00146">
    <property type="entry name" value="NADHdh"/>
    <property type="match status" value="1"/>
</dbReference>
<dbReference type="PROSITE" id="PS00667">
    <property type="entry name" value="COMPLEX1_ND1_1"/>
    <property type="match status" value="1"/>
</dbReference>
<dbReference type="PROSITE" id="PS00668">
    <property type="entry name" value="COMPLEX1_ND1_2"/>
    <property type="match status" value="1"/>
</dbReference>
<name>NUOH_WOLTR</name>
<evidence type="ECO:0000255" key="1">
    <source>
        <dbReference type="HAMAP-Rule" id="MF_01350"/>
    </source>
</evidence>
<evidence type="ECO:0000305" key="2"/>
<protein>
    <recommendedName>
        <fullName evidence="1">NADH-quinone oxidoreductase subunit H</fullName>
        <ecNumber evidence="1">7.1.1.-</ecNumber>
    </recommendedName>
    <alternativeName>
        <fullName evidence="1">NADH dehydrogenase I subunit H</fullName>
    </alternativeName>
    <alternativeName>
        <fullName evidence="1">NDH-1 subunit H</fullName>
    </alternativeName>
</protein>
<proteinExistence type="inferred from homology"/>
<feature type="chain" id="PRO_0000244961" description="NADH-quinone oxidoreductase subunit H">
    <location>
        <begin position="1"/>
        <end position="341"/>
    </location>
</feature>
<feature type="transmembrane region" description="Helical" evidence="1">
    <location>
        <begin position="38"/>
        <end position="58"/>
    </location>
</feature>
<feature type="transmembrane region" description="Helical" evidence="1">
    <location>
        <begin position="70"/>
        <end position="90"/>
    </location>
</feature>
<feature type="transmembrane region" description="Helical" evidence="1">
    <location>
        <begin position="115"/>
        <end position="135"/>
    </location>
</feature>
<feature type="transmembrane region" description="Helical" evidence="1">
    <location>
        <begin position="161"/>
        <end position="181"/>
    </location>
</feature>
<feature type="transmembrane region" description="Helical" evidence="1">
    <location>
        <begin position="187"/>
        <end position="207"/>
    </location>
</feature>
<feature type="transmembrane region" description="Helical" evidence="1">
    <location>
        <begin position="239"/>
        <end position="259"/>
    </location>
</feature>
<feature type="transmembrane region" description="Helical" evidence="1">
    <location>
        <begin position="275"/>
        <end position="295"/>
    </location>
</feature>
<feature type="transmembrane region" description="Helical" evidence="1">
    <location>
        <begin position="314"/>
        <end position="334"/>
    </location>
</feature>
<reference key="1">
    <citation type="journal article" date="2005" name="PLoS Biol.">
        <title>The Wolbachia genome of Brugia malayi: endosymbiont evolution within a human pathogenic nematode.</title>
        <authorList>
            <person name="Foster J."/>
            <person name="Ganatra M."/>
            <person name="Kamal I."/>
            <person name="Ware J."/>
            <person name="Makarova K."/>
            <person name="Ivanova N."/>
            <person name="Bhattacharyya A."/>
            <person name="Kapatral V."/>
            <person name="Kumar S."/>
            <person name="Posfai J."/>
            <person name="Vincze T."/>
            <person name="Ingram J."/>
            <person name="Moran L."/>
            <person name="Lapidus A."/>
            <person name="Omelchenko M."/>
            <person name="Kyrpides N."/>
            <person name="Ghedin E."/>
            <person name="Wang S."/>
            <person name="Goltsman E."/>
            <person name="Joukov V."/>
            <person name="Ostrovskaya O."/>
            <person name="Tsukerman K."/>
            <person name="Mazur M."/>
            <person name="Comb D."/>
            <person name="Koonin E."/>
            <person name="Slatko B."/>
        </authorList>
    </citation>
    <scope>NUCLEOTIDE SEQUENCE [LARGE SCALE GENOMIC DNA]</scope>
    <source>
        <strain>TRS</strain>
    </source>
</reference>
<accession>Q5GSR1</accession>
<organism>
    <name type="scientific">Wolbachia sp. subsp. Brugia malayi (strain TRS)</name>
    <dbReference type="NCBI Taxonomy" id="292805"/>
    <lineage>
        <taxon>Bacteria</taxon>
        <taxon>Pseudomonadati</taxon>
        <taxon>Pseudomonadota</taxon>
        <taxon>Alphaproteobacteria</taxon>
        <taxon>Rickettsiales</taxon>
        <taxon>Anaplasmataceae</taxon>
        <taxon>Wolbachieae</taxon>
        <taxon>Wolbachia</taxon>
    </lineage>
</organism>